<gene>
    <name type="ordered locus">Arth_2749</name>
</gene>
<keyword id="KW-1003">Cell membrane</keyword>
<keyword id="KW-0472">Membrane</keyword>
<keyword id="KW-1185">Reference proteome</keyword>
<keyword id="KW-0812">Transmembrane</keyword>
<keyword id="KW-1133">Transmembrane helix</keyword>
<accession>A0JYK8</accession>
<name>Y2749_ARTS2</name>
<sequence>MSRPASSTPPGRPQPRRGALTPTLIVVALVVVGFIFFANVWTDVLWYQQLGFFEVFLTENLARIIIFLAGFALMFVAMFYAIRIAYHARPVYAPDSEIRDNLNRYQAQLEPVRRVVMIGLPVLFGLFAGSAAASQWQKVLLFLNQEPFGQNDPQFNLDISFYLMTLPFLGFVTGFLISVVVVAGIAGILTHYLYGSIRIMERGIFTSRAAQIHLAVTGAVFLLLLGVNFWLDRYSSVQNSNGRWAGALYTDVNAVIPTKSILAVAAALVAILFIVAAVIGKWRLPVIGTAMLVITSILAGGVYPWVIQQFQVRPSEQTLERQFIERNISMTRAAYGLDKIQEKRYNATTNATTGALAPDAQTTANIRLLDPNLISDAFSQLEQYRPYYQFPSALNVDRYEVDGKVQDTVIAVRELNPDGLSANQQSWLNRHVVYTHGYGVVAAKGNKFTADGKPEFLQAGIPSTGVLGNDSTYQPRIYFGENSPEYSIVGAPEGSPHREQDRPAGKEGDGETQYTFTGNGGPNVGSFFNKVLYAIKFQSSDLLLSDGVNAESQILYDRNPRDRVEKVAPYLTVDGNAYPAVVDGRVKWIVDGYTTSQYYPYSQQEQLSAATADSQTTAGRTVALPNSSVNYIRNSVKATVDAYDGSVTLYAWDDQDPVLKAWQNVFPTSLKPYSEMSGALMSHVRYPEDLFKVQRELLGRYHVTQPDNFYTNNDAWSVPNDPTVKEEVKQPPFYMSLQMPDQDKPAFQLTSSFIPQVVNGTARNVLYGFLAADSDAGNQKGVKAESYGQLRLLQIPPEAQVPGPGQAQNKFNSDPTVSQALNLLRQGASAVLNGNLLTLPVGGGLLYVQPVYLRSTGETSYPTLQRVLVAFGDKIGFAPTLDEALNQLFGGQSGAKAGDFANNGQTPPPAAGGSTPPATGGTDAKAELKAALDEANAAIRAGQEALAKGDFAAYGEQQKKLSAALQKAIDAEAKLGSEGASPTPGATTAPTATPSAAATPSPSPSN</sequence>
<reference key="1">
    <citation type="journal article" date="2013" name="Stand. Genomic Sci.">
        <title>Complete genome sequence of Arthrobacter sp. strain FB24.</title>
        <authorList>
            <person name="Nakatsu C.H."/>
            <person name="Barabote R."/>
            <person name="Thompson S."/>
            <person name="Bruce D."/>
            <person name="Detter C."/>
            <person name="Brettin T."/>
            <person name="Han C."/>
            <person name="Beasley F."/>
            <person name="Chen W."/>
            <person name="Konopka A."/>
            <person name="Xie G."/>
        </authorList>
    </citation>
    <scope>NUCLEOTIDE SEQUENCE [LARGE SCALE GENOMIC DNA]</scope>
    <source>
        <strain>FB24</strain>
    </source>
</reference>
<comment type="subcellular location">
    <subcellularLocation>
        <location evidence="1">Cell membrane</location>
        <topology evidence="1">Multi-pass membrane protein</topology>
    </subcellularLocation>
</comment>
<comment type="similarity">
    <text evidence="1">Belongs to the UPF0182 family.</text>
</comment>
<dbReference type="EMBL" id="CP000454">
    <property type="protein sequence ID" value="ABK04128.1"/>
    <property type="molecule type" value="Genomic_DNA"/>
</dbReference>
<dbReference type="RefSeq" id="WP_011692589.1">
    <property type="nucleotide sequence ID" value="NC_008541.1"/>
</dbReference>
<dbReference type="SMR" id="A0JYK8"/>
<dbReference type="STRING" id="290399.Arth_2749"/>
<dbReference type="KEGG" id="art:Arth_2749"/>
<dbReference type="eggNOG" id="COG1615">
    <property type="taxonomic scope" value="Bacteria"/>
</dbReference>
<dbReference type="HOGENOM" id="CLU_007733_1_0_11"/>
<dbReference type="OrthoDB" id="9763654at2"/>
<dbReference type="Proteomes" id="UP000000754">
    <property type="component" value="Chromosome"/>
</dbReference>
<dbReference type="GO" id="GO:0005576">
    <property type="term" value="C:extracellular region"/>
    <property type="evidence" value="ECO:0007669"/>
    <property type="project" value="TreeGrafter"/>
</dbReference>
<dbReference type="GO" id="GO:0005886">
    <property type="term" value="C:plasma membrane"/>
    <property type="evidence" value="ECO:0007669"/>
    <property type="project" value="UniProtKB-SubCell"/>
</dbReference>
<dbReference type="HAMAP" id="MF_01600">
    <property type="entry name" value="UPF0182"/>
    <property type="match status" value="1"/>
</dbReference>
<dbReference type="InterPro" id="IPR005372">
    <property type="entry name" value="UPF0182"/>
</dbReference>
<dbReference type="NCBIfam" id="NF000825">
    <property type="entry name" value="PRK00068.1"/>
    <property type="match status" value="1"/>
</dbReference>
<dbReference type="PANTHER" id="PTHR39344">
    <property type="entry name" value="UPF0182 PROTEIN SLL1060"/>
    <property type="match status" value="1"/>
</dbReference>
<dbReference type="PANTHER" id="PTHR39344:SF1">
    <property type="entry name" value="UPF0182 PROTEIN SLL1060"/>
    <property type="match status" value="1"/>
</dbReference>
<dbReference type="Pfam" id="PF03699">
    <property type="entry name" value="UPF0182"/>
    <property type="match status" value="1"/>
</dbReference>
<evidence type="ECO:0000255" key="1">
    <source>
        <dbReference type="HAMAP-Rule" id="MF_01600"/>
    </source>
</evidence>
<evidence type="ECO:0000256" key="2">
    <source>
        <dbReference type="SAM" id="MobiDB-lite"/>
    </source>
</evidence>
<organism>
    <name type="scientific">Arthrobacter sp. (strain FB24)</name>
    <dbReference type="NCBI Taxonomy" id="290399"/>
    <lineage>
        <taxon>Bacteria</taxon>
        <taxon>Bacillati</taxon>
        <taxon>Actinomycetota</taxon>
        <taxon>Actinomycetes</taxon>
        <taxon>Micrococcales</taxon>
        <taxon>Micrococcaceae</taxon>
        <taxon>Arthrobacter</taxon>
    </lineage>
</organism>
<feature type="chain" id="PRO_0000291271" description="UPF0182 protein Arth_2749">
    <location>
        <begin position="1"/>
        <end position="1006"/>
    </location>
</feature>
<feature type="transmembrane region" description="Helical" evidence="1">
    <location>
        <begin position="18"/>
        <end position="38"/>
    </location>
</feature>
<feature type="transmembrane region" description="Helical" evidence="1">
    <location>
        <begin position="64"/>
        <end position="84"/>
    </location>
</feature>
<feature type="transmembrane region" description="Helical" evidence="1">
    <location>
        <begin position="115"/>
        <end position="135"/>
    </location>
</feature>
<feature type="transmembrane region" description="Helical" evidence="1">
    <location>
        <begin position="168"/>
        <end position="188"/>
    </location>
</feature>
<feature type="transmembrane region" description="Helical" evidence="1">
    <location>
        <begin position="211"/>
        <end position="231"/>
    </location>
</feature>
<feature type="transmembrane region" description="Helical" evidence="1">
    <location>
        <begin position="260"/>
        <end position="280"/>
    </location>
</feature>
<feature type="transmembrane region" description="Helical" evidence="1">
    <location>
        <begin position="287"/>
        <end position="307"/>
    </location>
</feature>
<feature type="region of interest" description="Disordered" evidence="2">
    <location>
        <begin position="490"/>
        <end position="519"/>
    </location>
</feature>
<feature type="region of interest" description="Disordered" evidence="2">
    <location>
        <begin position="896"/>
        <end position="923"/>
    </location>
</feature>
<feature type="region of interest" description="Disordered" evidence="2">
    <location>
        <begin position="975"/>
        <end position="1006"/>
    </location>
</feature>
<feature type="compositionally biased region" description="Basic and acidic residues" evidence="2">
    <location>
        <begin position="495"/>
        <end position="509"/>
    </location>
</feature>
<feature type="compositionally biased region" description="Low complexity" evidence="2">
    <location>
        <begin position="911"/>
        <end position="923"/>
    </location>
</feature>
<feature type="compositionally biased region" description="Low complexity" evidence="2">
    <location>
        <begin position="979"/>
        <end position="1000"/>
    </location>
</feature>
<proteinExistence type="inferred from homology"/>
<protein>
    <recommendedName>
        <fullName evidence="1">UPF0182 protein Arth_2749</fullName>
    </recommendedName>
</protein>